<accession>Q6AXM1</accession>
<feature type="chain" id="PRO_0000189662" description="Carbohydrate sulfotransferase 10">
    <location>
        <begin position="1"/>
        <end position="365"/>
    </location>
</feature>
<feature type="topological domain" description="Cytoplasmic" evidence="2">
    <location>
        <begin position="1"/>
        <end position="6"/>
    </location>
</feature>
<feature type="transmembrane region" description="Helical; Signal-anchor for type II membrane protein" evidence="2">
    <location>
        <begin position="7"/>
        <end position="27"/>
    </location>
</feature>
<feature type="topological domain" description="Lumenal" evidence="2">
    <location>
        <begin position="28"/>
        <end position="356"/>
    </location>
</feature>
<feature type="binding site" evidence="1">
    <location>
        <begin position="132"/>
        <end position="138"/>
    </location>
    <ligand>
        <name>3'-phosphoadenylyl sulfate</name>
        <dbReference type="ChEBI" id="CHEBI:58339"/>
    </ligand>
</feature>
<feature type="binding site" evidence="1">
    <location>
        <begin position="194"/>
        <end position="202"/>
    </location>
    <ligand>
        <name>3'-phosphoadenylyl sulfate</name>
        <dbReference type="ChEBI" id="CHEBI:58339"/>
    </ligand>
</feature>
<feature type="glycosylation site" description="N-linked (GlcNAc...) asparagine" evidence="2">
    <location>
        <position position="99"/>
    </location>
</feature>
<feature type="glycosylation site" description="N-linked (GlcNAc...) asparagine" evidence="2">
    <location>
        <position position="104"/>
    </location>
</feature>
<feature type="glycosylation site" description="N-linked (GlcNAc...) asparagine" evidence="2">
    <location>
        <position position="325"/>
    </location>
</feature>
<protein>
    <recommendedName>
        <fullName>Carbohydrate sulfotransferase 10</fullName>
        <ecNumber>2.8.2.-</ecNumber>
    </recommendedName>
    <alternativeName>
        <fullName>HNK-1 sulfotransferase</fullName>
        <shortName>HNK-1ST</shortName>
        <shortName>HNK1ST</shortName>
    </alternativeName>
</protein>
<organism>
    <name type="scientific">Danio rerio</name>
    <name type="common">Zebrafish</name>
    <name type="synonym">Brachydanio rerio</name>
    <dbReference type="NCBI Taxonomy" id="7955"/>
    <lineage>
        <taxon>Eukaryota</taxon>
        <taxon>Metazoa</taxon>
        <taxon>Chordata</taxon>
        <taxon>Craniata</taxon>
        <taxon>Vertebrata</taxon>
        <taxon>Euteleostomi</taxon>
        <taxon>Actinopterygii</taxon>
        <taxon>Neopterygii</taxon>
        <taxon>Teleostei</taxon>
        <taxon>Ostariophysi</taxon>
        <taxon>Cypriniformes</taxon>
        <taxon>Danionidae</taxon>
        <taxon>Danioninae</taxon>
        <taxon>Danio</taxon>
    </lineage>
</organism>
<gene>
    <name type="primary">chst10</name>
    <name type="ORF">zgc:100964</name>
</gene>
<comment type="function">
    <text>Catalyzes the transfer of sulfate to position 3 of terminal glucuronic acid of both protein- and lipid-linked oligosaccharides. Participates in biosynthesis of HNK-1 carbohydrate structure, a sulfated glucuronyl-lactosaminyl residue carried by many neural recognition molecules.</text>
</comment>
<comment type="subcellular location">
    <subcellularLocation>
        <location evidence="1">Golgi apparatus membrane</location>
        <topology evidence="1">Single-pass type II membrane protein</topology>
    </subcellularLocation>
</comment>
<comment type="similarity">
    <text evidence="3">Belongs to the sulfotransferase 2 family.</text>
</comment>
<proteinExistence type="evidence at transcript level"/>
<keyword id="KW-0119">Carbohydrate metabolism</keyword>
<keyword id="KW-0325">Glycoprotein</keyword>
<keyword id="KW-0333">Golgi apparatus</keyword>
<keyword id="KW-0472">Membrane</keyword>
<keyword id="KW-1185">Reference proteome</keyword>
<keyword id="KW-0735">Signal-anchor</keyword>
<keyword id="KW-0808">Transferase</keyword>
<keyword id="KW-0812">Transmembrane</keyword>
<keyword id="KW-1133">Transmembrane helix</keyword>
<evidence type="ECO:0000250" key="1"/>
<evidence type="ECO:0000255" key="2"/>
<evidence type="ECO:0000305" key="3"/>
<dbReference type="EC" id="2.8.2.-"/>
<dbReference type="EMBL" id="BC079482">
    <property type="protein sequence ID" value="AAH79482.1"/>
    <property type="molecule type" value="mRNA"/>
</dbReference>
<dbReference type="RefSeq" id="NP_001003779.1">
    <property type="nucleotide sequence ID" value="NM_001003779.1"/>
</dbReference>
<dbReference type="FunCoup" id="Q6AXM1">
    <property type="interactions" value="937"/>
</dbReference>
<dbReference type="STRING" id="7955.ENSDARP00000047210"/>
<dbReference type="GlyCosmos" id="Q6AXM1">
    <property type="glycosylation" value="3 sites, No reported glycans"/>
</dbReference>
<dbReference type="PaxDb" id="7955-ENSDARP00000047210"/>
<dbReference type="Ensembl" id="ENSDART00000047211">
    <property type="protein sequence ID" value="ENSDARP00000047210"/>
    <property type="gene ID" value="ENSDARG00000031632"/>
</dbReference>
<dbReference type="GeneID" id="445322"/>
<dbReference type="KEGG" id="dre:445322"/>
<dbReference type="AGR" id="ZFIN:ZDB-GENE-040808-40"/>
<dbReference type="CTD" id="9486"/>
<dbReference type="ZFIN" id="ZDB-GENE-040808-40">
    <property type="gene designation" value="chst10"/>
</dbReference>
<dbReference type="eggNOG" id="KOG4651">
    <property type="taxonomic scope" value="Eukaryota"/>
</dbReference>
<dbReference type="HOGENOM" id="CLU_043398_2_0_1"/>
<dbReference type="InParanoid" id="Q6AXM1"/>
<dbReference type="OMA" id="HWPEEFQ"/>
<dbReference type="OrthoDB" id="2019940at2759"/>
<dbReference type="PhylomeDB" id="Q6AXM1"/>
<dbReference type="TreeFam" id="TF325581"/>
<dbReference type="Reactome" id="R-DRE-975578">
    <property type="pathway name" value="Reactions specific to the complex N-glycan synthesis pathway"/>
</dbReference>
<dbReference type="PRO" id="PR:Q6AXM1"/>
<dbReference type="Proteomes" id="UP000000437">
    <property type="component" value="Chromosome 1"/>
</dbReference>
<dbReference type="Bgee" id="ENSDARG00000031632">
    <property type="expression patterns" value="Expressed in pharyngeal gill and 35 other cell types or tissues"/>
</dbReference>
<dbReference type="ExpressionAtlas" id="Q6AXM1">
    <property type="expression patterns" value="baseline and differential"/>
</dbReference>
<dbReference type="GO" id="GO:0000139">
    <property type="term" value="C:Golgi membrane"/>
    <property type="evidence" value="ECO:0007669"/>
    <property type="project" value="UniProtKB-SubCell"/>
</dbReference>
<dbReference type="GO" id="GO:0008146">
    <property type="term" value="F:sulfotransferase activity"/>
    <property type="evidence" value="ECO:0000318"/>
    <property type="project" value="GO_Central"/>
</dbReference>
<dbReference type="GO" id="GO:0016051">
    <property type="term" value="P:carbohydrate biosynthetic process"/>
    <property type="evidence" value="ECO:0007669"/>
    <property type="project" value="InterPro"/>
</dbReference>
<dbReference type="GO" id="GO:0030166">
    <property type="term" value="P:proteoglycan biosynthetic process"/>
    <property type="evidence" value="ECO:0000318"/>
    <property type="project" value="GO_Central"/>
</dbReference>
<dbReference type="InterPro" id="IPR018011">
    <property type="entry name" value="Carb_sulfotrans_8-10"/>
</dbReference>
<dbReference type="InterPro" id="IPR005331">
    <property type="entry name" value="Sulfotransferase"/>
</dbReference>
<dbReference type="PANTHER" id="PTHR12137">
    <property type="entry name" value="CARBOHYDRATE SULFOTRANSFERASE"/>
    <property type="match status" value="1"/>
</dbReference>
<dbReference type="PANTHER" id="PTHR12137:SF2">
    <property type="entry name" value="CARBOHYDRATE SULFOTRANSFERASE 10"/>
    <property type="match status" value="1"/>
</dbReference>
<dbReference type="Pfam" id="PF03567">
    <property type="entry name" value="Sulfotransfer_2"/>
    <property type="match status" value="1"/>
</dbReference>
<name>CHSTA_DANRE</name>
<reference key="1">
    <citation type="submission" date="2004-08" db="EMBL/GenBank/DDBJ databases">
        <authorList>
            <consortium name="NIH - Zebrafish Gene Collection (ZGC) project"/>
        </authorList>
    </citation>
    <scope>NUCLEOTIDE SEQUENCE [LARGE SCALE MRNA]</scope>
    <source>
        <tissue>Embryo</tissue>
    </source>
</reference>
<sequence length="365" mass="42512">MRRHWLLVGACGWVLLILMFVSKFINFSFRIPGDYAGRSEIFVWTLSSVTTKLPSVVWPEKGASQPYILSSVSPSVVEPIDWHLVNEKRLEQLSTVCSNSSIWNLTHTTVRKFVLDRIFVCDKHKILFCQTPKVGNTQWKKVLIVLNGKFSKVEAIPENLVHDHERNGLPRLSSMTDTEIHQRLNSYFKFFIVRDPFERLISAFKDKFVKNPRFEPWYKHDIAPAIVRKYRRSHHDDSESVGLRFEDFVRYLGDKTGRQHLDRQFGDHIIHWLTYAELCAPCDISYNVVGHHETLELDAPYILKSAGIAGLVSYPSIPPGITRYNRTKVERYFSGISQRDIRRLYARYQGDFSLFDYPKPAFLLN</sequence>